<reference key="1">
    <citation type="journal article" date="1997" name="Syst. Bot.">
        <title>Systematics of the Lyonia group (Andromedeae, Ericaceae) and the use of species as terminals in higher-level cladistic analyses.</title>
        <authorList>
            <person name="Kron K.A."/>
            <person name="Judd W.S."/>
        </authorList>
        <dbReference type="AGRICOLA" id="IND21637351"/>
    </citation>
    <scope>NUCLEOTIDE SEQUENCE [GENOMIC DNA]</scope>
</reference>
<gene>
    <name evidence="1" type="primary">matK</name>
</gene>
<geneLocation type="chloroplast"/>
<proteinExistence type="inferred from homology"/>
<dbReference type="EMBL" id="U61311">
    <property type="protein sequence ID" value="AAB93734.1"/>
    <property type="molecule type" value="Genomic_DNA"/>
</dbReference>
<dbReference type="GO" id="GO:0009507">
    <property type="term" value="C:chloroplast"/>
    <property type="evidence" value="ECO:0007669"/>
    <property type="project" value="UniProtKB-SubCell"/>
</dbReference>
<dbReference type="GO" id="GO:0003723">
    <property type="term" value="F:RNA binding"/>
    <property type="evidence" value="ECO:0007669"/>
    <property type="project" value="UniProtKB-KW"/>
</dbReference>
<dbReference type="GO" id="GO:0006397">
    <property type="term" value="P:mRNA processing"/>
    <property type="evidence" value="ECO:0007669"/>
    <property type="project" value="UniProtKB-KW"/>
</dbReference>
<dbReference type="GO" id="GO:0008380">
    <property type="term" value="P:RNA splicing"/>
    <property type="evidence" value="ECO:0007669"/>
    <property type="project" value="UniProtKB-UniRule"/>
</dbReference>
<dbReference type="GO" id="GO:0008033">
    <property type="term" value="P:tRNA processing"/>
    <property type="evidence" value="ECO:0007669"/>
    <property type="project" value="UniProtKB-KW"/>
</dbReference>
<dbReference type="HAMAP" id="MF_01390">
    <property type="entry name" value="MatK"/>
    <property type="match status" value="1"/>
</dbReference>
<dbReference type="InterPro" id="IPR024937">
    <property type="entry name" value="Domain_X"/>
</dbReference>
<dbReference type="InterPro" id="IPR002866">
    <property type="entry name" value="Maturase_MatK"/>
</dbReference>
<dbReference type="InterPro" id="IPR024942">
    <property type="entry name" value="Maturase_MatK_N"/>
</dbReference>
<dbReference type="PANTHER" id="PTHR34811">
    <property type="entry name" value="MATURASE K"/>
    <property type="match status" value="1"/>
</dbReference>
<dbReference type="PANTHER" id="PTHR34811:SF1">
    <property type="entry name" value="MATURASE K"/>
    <property type="match status" value="1"/>
</dbReference>
<dbReference type="Pfam" id="PF01348">
    <property type="entry name" value="Intron_maturas2"/>
    <property type="match status" value="1"/>
</dbReference>
<dbReference type="Pfam" id="PF01824">
    <property type="entry name" value="MatK_N"/>
    <property type="match status" value="1"/>
</dbReference>
<feature type="chain" id="PRO_0000143497" description="Maturase K">
    <location>
        <begin position="1"/>
        <end position="507"/>
    </location>
</feature>
<sequence length="507" mass="60753">MEEFKRYLELDRSQQHDFIYPLIFQEYIYALAHDRGLNGSIFFENSGYDNKSSLLIVKRLITHLITQMYQQNHFLFYTNDFNPNKFLRCNTNLYYQMIFEGFVVVVEIPFYLRLLSFLEGKERVKSHNLRSLHSIFPFLEDKFSHLNSLLDILIPHPVHLEILVQTLRYWVKDPSSLHLLRFFLHEYPNWNSLITPKKSSFSFSKRNQRFLFFLYNFHLCEYESIFIFLRNQSSHLCSISSEIFLERISFYKKKDLEEVFTKDLTAILWVFKDPYMHYCRYRGKSILASKDSCLLMNKWKYYLVNFWECYFYIWSQPRRIHINQLSNNSLDFLGYLLSVRLKPSMVRSQMIENSCIIENASKQFDTLVPITPLFRSLSKAKFCNMLGHPISKPVWAASSDSDIIERFGRIYRNLSHYHSGSLKKISLYRIKYILRLSCARTLARKHKSTVRSFLKRLGVGLLEEFFTEEEQVFYLTFPKASSTSGKLYQRRIWYLDIFCINDPANHE</sequence>
<accession>O47128</accession>
<name>MATK_LYOLI</name>
<comment type="function">
    <text evidence="1">Usually encoded in the trnK tRNA gene intron. Probably assists in splicing its own and other chloroplast group II introns.</text>
</comment>
<comment type="subcellular location">
    <subcellularLocation>
        <location>Plastid</location>
        <location>Chloroplast</location>
    </subcellularLocation>
</comment>
<comment type="similarity">
    <text evidence="1">Belongs to the intron maturase 2 family. MatK subfamily.</text>
</comment>
<keyword id="KW-0150">Chloroplast</keyword>
<keyword id="KW-0507">mRNA processing</keyword>
<keyword id="KW-0934">Plastid</keyword>
<keyword id="KW-0694">RNA-binding</keyword>
<keyword id="KW-0819">tRNA processing</keyword>
<protein>
    <recommendedName>
        <fullName evidence="1">Maturase K</fullName>
    </recommendedName>
    <alternativeName>
        <fullName evidence="1">Intron maturase</fullName>
    </alternativeName>
</protein>
<evidence type="ECO:0000255" key="1">
    <source>
        <dbReference type="HAMAP-Rule" id="MF_01390"/>
    </source>
</evidence>
<organism>
    <name type="scientific">Lyonia ligustrina</name>
    <name type="common">Maleberry</name>
    <name type="synonym">Vaccinium ligustrinum</name>
    <dbReference type="NCBI Taxonomy" id="49151"/>
    <lineage>
        <taxon>Eukaryota</taxon>
        <taxon>Viridiplantae</taxon>
        <taxon>Streptophyta</taxon>
        <taxon>Embryophyta</taxon>
        <taxon>Tracheophyta</taxon>
        <taxon>Spermatophyta</taxon>
        <taxon>Magnoliopsida</taxon>
        <taxon>eudicotyledons</taxon>
        <taxon>Gunneridae</taxon>
        <taxon>Pentapetalae</taxon>
        <taxon>asterids</taxon>
        <taxon>Ericales</taxon>
        <taxon>Ericaceae</taxon>
        <taxon>Vaccinioideae</taxon>
        <taxon>Lyonieae</taxon>
        <taxon>Lyonia</taxon>
    </lineage>
</organism>